<protein>
    <recommendedName>
        <fullName evidence="1">Cytochrome b559 subunit beta</fullName>
    </recommendedName>
    <alternativeName>
        <fullName evidence="1">PSII reaction center subunit VI</fullName>
    </alternativeName>
</protein>
<proteinExistence type="inferred from homology"/>
<accession>Q6L384</accession>
<evidence type="ECO:0000255" key="1">
    <source>
        <dbReference type="HAMAP-Rule" id="MF_00643"/>
    </source>
</evidence>
<reference key="1">
    <citation type="journal article" date="2004" name="Curr. Genet.">
        <title>Structural features and transcript-editing analysis of sugarcane (Saccharum officinarum L.) chloroplast genome.</title>
        <authorList>
            <person name="Calsa T. Jr."/>
            <person name="Carraro D.M."/>
            <person name="Benatti M.R."/>
            <person name="Barbosa A.C."/>
            <person name="Kitajima J.P."/>
            <person name="Carrer H."/>
        </authorList>
    </citation>
    <scope>NUCLEOTIDE SEQUENCE [LARGE SCALE GENOMIC DNA]</scope>
    <source>
        <strain>cv. SP-80-3280</strain>
    </source>
</reference>
<name>PSBF_SACHY</name>
<geneLocation type="chloroplast"/>
<keyword id="KW-0150">Chloroplast</keyword>
<keyword id="KW-0249">Electron transport</keyword>
<keyword id="KW-0349">Heme</keyword>
<keyword id="KW-0408">Iron</keyword>
<keyword id="KW-0472">Membrane</keyword>
<keyword id="KW-0479">Metal-binding</keyword>
<keyword id="KW-0602">Photosynthesis</keyword>
<keyword id="KW-0604">Photosystem II</keyword>
<keyword id="KW-0934">Plastid</keyword>
<keyword id="KW-0793">Thylakoid</keyword>
<keyword id="KW-0812">Transmembrane</keyword>
<keyword id="KW-1133">Transmembrane helix</keyword>
<keyword id="KW-0813">Transport</keyword>
<organism>
    <name type="scientific">Saccharum hybrid</name>
    <name type="common">Sugarcane</name>
    <dbReference type="NCBI Taxonomy" id="15819"/>
    <lineage>
        <taxon>Eukaryota</taxon>
        <taxon>Viridiplantae</taxon>
        <taxon>Streptophyta</taxon>
        <taxon>Embryophyta</taxon>
        <taxon>Tracheophyta</taxon>
        <taxon>Spermatophyta</taxon>
        <taxon>Magnoliopsida</taxon>
        <taxon>Liliopsida</taxon>
        <taxon>Poales</taxon>
        <taxon>Poaceae</taxon>
        <taxon>PACMAD clade</taxon>
        <taxon>Panicoideae</taxon>
        <taxon>Andropogonodae</taxon>
        <taxon>Andropogoneae</taxon>
        <taxon>Saccharinae</taxon>
        <taxon>Saccharum</taxon>
    </lineage>
</organism>
<comment type="function">
    <text evidence="1">This b-type cytochrome is tightly associated with the reaction center of photosystem II (PSII). PSII is a light-driven water:plastoquinone oxidoreductase that uses light energy to abstract electrons from H(2)O, generating O(2) and a proton gradient subsequently used for ATP formation. It consists of a core antenna complex that captures photons, and an electron transfer chain that converts photonic excitation into a charge separation.</text>
</comment>
<comment type="cofactor">
    <cofactor evidence="1">
        <name>heme b</name>
        <dbReference type="ChEBI" id="CHEBI:60344"/>
    </cofactor>
    <text evidence="1">With its partner (PsbE) binds heme. PSII binds additional chlorophylls, carotenoids and specific lipids.</text>
</comment>
<comment type="subunit">
    <text evidence="1">Heterodimer of an alpha subunit and a beta subunit. PSII is composed of 1 copy each of membrane proteins PsbA, PsbB, PsbC, PsbD, PsbE, PsbF, PsbH, PsbI, PsbJ, PsbK, PsbL, PsbM, PsbT, PsbX, PsbY, PsbZ, Psb30/Ycf12, at least 3 peripheral proteins of the oxygen-evolving complex and a large number of cofactors. It forms dimeric complexes.</text>
</comment>
<comment type="subcellular location">
    <subcellularLocation>
        <location evidence="1">Plastid</location>
        <location evidence="1">Chloroplast thylakoid membrane</location>
        <topology evidence="1">Single-pass membrane protein</topology>
    </subcellularLocation>
</comment>
<comment type="similarity">
    <text evidence="1">Belongs to the PsbE/PsbF family.</text>
</comment>
<dbReference type="EMBL" id="AE009947">
    <property type="protein sequence ID" value="AAT44708.1"/>
    <property type="molecule type" value="Genomic_DNA"/>
</dbReference>
<dbReference type="SMR" id="Q6L384"/>
<dbReference type="GO" id="GO:0009535">
    <property type="term" value="C:chloroplast thylakoid membrane"/>
    <property type="evidence" value="ECO:0007669"/>
    <property type="project" value="UniProtKB-SubCell"/>
</dbReference>
<dbReference type="GO" id="GO:0009539">
    <property type="term" value="C:photosystem II reaction center"/>
    <property type="evidence" value="ECO:0007669"/>
    <property type="project" value="InterPro"/>
</dbReference>
<dbReference type="GO" id="GO:0009055">
    <property type="term" value="F:electron transfer activity"/>
    <property type="evidence" value="ECO:0007669"/>
    <property type="project" value="UniProtKB-UniRule"/>
</dbReference>
<dbReference type="GO" id="GO:0020037">
    <property type="term" value="F:heme binding"/>
    <property type="evidence" value="ECO:0007669"/>
    <property type="project" value="InterPro"/>
</dbReference>
<dbReference type="GO" id="GO:0005506">
    <property type="term" value="F:iron ion binding"/>
    <property type="evidence" value="ECO:0007669"/>
    <property type="project" value="UniProtKB-UniRule"/>
</dbReference>
<dbReference type="GO" id="GO:0009767">
    <property type="term" value="P:photosynthetic electron transport chain"/>
    <property type="evidence" value="ECO:0007669"/>
    <property type="project" value="InterPro"/>
</dbReference>
<dbReference type="HAMAP" id="MF_00643">
    <property type="entry name" value="PSII_PsbF"/>
    <property type="match status" value="1"/>
</dbReference>
<dbReference type="InterPro" id="IPR006241">
    <property type="entry name" value="PSII_cyt_b559_bsu"/>
</dbReference>
<dbReference type="InterPro" id="IPR006216">
    <property type="entry name" value="PSII_cyt_b559_CS"/>
</dbReference>
<dbReference type="InterPro" id="IPR013081">
    <property type="entry name" value="PSII_cyt_b559_N"/>
</dbReference>
<dbReference type="NCBIfam" id="TIGR01333">
    <property type="entry name" value="cyt_b559_beta"/>
    <property type="match status" value="1"/>
</dbReference>
<dbReference type="Pfam" id="PF00283">
    <property type="entry name" value="Cytochrom_B559"/>
    <property type="match status" value="1"/>
</dbReference>
<dbReference type="PIRSF" id="PIRSF000037">
    <property type="entry name" value="PsbF"/>
    <property type="match status" value="1"/>
</dbReference>
<dbReference type="SUPFAM" id="SSF161045">
    <property type="entry name" value="Cytochrome b559 subunits"/>
    <property type="match status" value="1"/>
</dbReference>
<dbReference type="PROSITE" id="PS00537">
    <property type="entry name" value="CYTOCHROME_B559"/>
    <property type="match status" value="1"/>
</dbReference>
<gene>
    <name evidence="1" type="primary">psbF</name>
    <name type="ordered locus">PS139</name>
</gene>
<feature type="chain" id="PRO_0000200445" description="Cytochrome b559 subunit beta">
    <location>
        <begin position="1"/>
        <end position="39"/>
    </location>
</feature>
<feature type="transmembrane region" description="Helical" evidence="1">
    <location>
        <begin position="14"/>
        <end position="30"/>
    </location>
</feature>
<feature type="binding site" description="axial binding residue" evidence="1">
    <location>
        <position position="18"/>
    </location>
    <ligand>
        <name>heme</name>
        <dbReference type="ChEBI" id="CHEBI:30413"/>
        <note>ligand shared with alpha subunit</note>
    </ligand>
    <ligandPart>
        <name>Fe</name>
        <dbReference type="ChEBI" id="CHEBI:18248"/>
    </ligandPart>
</feature>
<sequence>MTIDRTYPIFTVRWLAVHGLAVPTVFFLGSISAMQFIQR</sequence>